<keyword id="KW-0997">Cell inner membrane</keyword>
<keyword id="KW-1003">Cell membrane</keyword>
<keyword id="KW-0285">Flavoprotein</keyword>
<keyword id="KW-0288">FMN</keyword>
<keyword id="KW-0472">Membrane</keyword>
<keyword id="KW-0560">Oxidoreductase</keyword>
<name>LLDD_VIBCM</name>
<gene>
    <name evidence="1" type="primary">lldD</name>
    <name type="ordered locus">VCM66_A0943</name>
</gene>
<organism>
    <name type="scientific">Vibrio cholerae serotype O1 (strain M66-2)</name>
    <dbReference type="NCBI Taxonomy" id="579112"/>
    <lineage>
        <taxon>Bacteria</taxon>
        <taxon>Pseudomonadati</taxon>
        <taxon>Pseudomonadota</taxon>
        <taxon>Gammaproteobacteria</taxon>
        <taxon>Vibrionales</taxon>
        <taxon>Vibrionaceae</taxon>
        <taxon>Vibrio</taxon>
    </lineage>
</organism>
<dbReference type="EC" id="1.1.-.-" evidence="1"/>
<dbReference type="EMBL" id="CP001234">
    <property type="protein sequence ID" value="ACP07902.1"/>
    <property type="molecule type" value="Genomic_DNA"/>
</dbReference>
<dbReference type="RefSeq" id="WP_000587013.1">
    <property type="nucleotide sequence ID" value="NC_012580.1"/>
</dbReference>
<dbReference type="SMR" id="C3LWP7"/>
<dbReference type="KEGG" id="vcm:VCM66_A0943"/>
<dbReference type="HOGENOM" id="CLU_020639_0_0_6"/>
<dbReference type="Proteomes" id="UP000001217">
    <property type="component" value="Chromosome II"/>
</dbReference>
<dbReference type="GO" id="GO:0005886">
    <property type="term" value="C:plasma membrane"/>
    <property type="evidence" value="ECO:0007669"/>
    <property type="project" value="UniProtKB-SubCell"/>
</dbReference>
<dbReference type="GO" id="GO:0010181">
    <property type="term" value="F:FMN binding"/>
    <property type="evidence" value="ECO:0007669"/>
    <property type="project" value="InterPro"/>
</dbReference>
<dbReference type="GO" id="GO:0004459">
    <property type="term" value="F:L-lactate dehydrogenase activity"/>
    <property type="evidence" value="ECO:0007669"/>
    <property type="project" value="UniProtKB-UniRule"/>
</dbReference>
<dbReference type="GO" id="GO:0009060">
    <property type="term" value="P:aerobic respiration"/>
    <property type="evidence" value="ECO:0007669"/>
    <property type="project" value="TreeGrafter"/>
</dbReference>
<dbReference type="GO" id="GO:0006089">
    <property type="term" value="P:lactate metabolic process"/>
    <property type="evidence" value="ECO:0007669"/>
    <property type="project" value="UniProtKB-UniRule"/>
</dbReference>
<dbReference type="CDD" id="cd02809">
    <property type="entry name" value="alpha_hydroxyacid_oxid_FMN"/>
    <property type="match status" value="1"/>
</dbReference>
<dbReference type="FunFam" id="3.20.20.70:FF:000029">
    <property type="entry name" value="L-lactate dehydrogenase"/>
    <property type="match status" value="1"/>
</dbReference>
<dbReference type="Gene3D" id="3.20.20.70">
    <property type="entry name" value="Aldolase class I"/>
    <property type="match status" value="1"/>
</dbReference>
<dbReference type="HAMAP" id="MF_01559">
    <property type="entry name" value="L_lact_dehydr"/>
    <property type="match status" value="1"/>
</dbReference>
<dbReference type="InterPro" id="IPR013785">
    <property type="entry name" value="Aldolase_TIM"/>
</dbReference>
<dbReference type="InterPro" id="IPR012133">
    <property type="entry name" value="Alpha-hydoxy_acid_DH_FMN"/>
</dbReference>
<dbReference type="InterPro" id="IPR000262">
    <property type="entry name" value="FMN-dep_DH"/>
</dbReference>
<dbReference type="InterPro" id="IPR037396">
    <property type="entry name" value="FMN_HAD"/>
</dbReference>
<dbReference type="InterPro" id="IPR008259">
    <property type="entry name" value="FMN_hydac_DH_AS"/>
</dbReference>
<dbReference type="InterPro" id="IPR020920">
    <property type="entry name" value="LldD"/>
</dbReference>
<dbReference type="NCBIfam" id="NF033901">
    <property type="entry name" value="L_lactate_LldD"/>
    <property type="match status" value="1"/>
</dbReference>
<dbReference type="NCBIfam" id="NF008398">
    <property type="entry name" value="PRK11197.1"/>
    <property type="match status" value="1"/>
</dbReference>
<dbReference type="PANTHER" id="PTHR10578:SF85">
    <property type="entry name" value="L-LACTATE DEHYDROGENASE"/>
    <property type="match status" value="1"/>
</dbReference>
<dbReference type="PANTHER" id="PTHR10578">
    <property type="entry name" value="S -2-HYDROXY-ACID OXIDASE-RELATED"/>
    <property type="match status" value="1"/>
</dbReference>
<dbReference type="Pfam" id="PF01070">
    <property type="entry name" value="FMN_dh"/>
    <property type="match status" value="1"/>
</dbReference>
<dbReference type="PIRSF" id="PIRSF000138">
    <property type="entry name" value="Al-hdrx_acd_dh"/>
    <property type="match status" value="1"/>
</dbReference>
<dbReference type="SUPFAM" id="SSF51395">
    <property type="entry name" value="FMN-linked oxidoreductases"/>
    <property type="match status" value="1"/>
</dbReference>
<dbReference type="PROSITE" id="PS00557">
    <property type="entry name" value="FMN_HYDROXY_ACID_DH_1"/>
    <property type="match status" value="1"/>
</dbReference>
<dbReference type="PROSITE" id="PS51349">
    <property type="entry name" value="FMN_HYDROXY_ACID_DH_2"/>
    <property type="match status" value="1"/>
</dbReference>
<evidence type="ECO:0000255" key="1">
    <source>
        <dbReference type="HAMAP-Rule" id="MF_01559"/>
    </source>
</evidence>
<feature type="chain" id="PRO_0000383451" description="L-lactate dehydrogenase">
    <location>
        <begin position="1"/>
        <end position="378"/>
    </location>
</feature>
<feature type="domain" description="FMN hydroxy acid dehydrogenase" evidence="1">
    <location>
        <begin position="1"/>
        <end position="378"/>
    </location>
</feature>
<feature type="active site" description="Proton acceptor" evidence="1">
    <location>
        <position position="275"/>
    </location>
</feature>
<feature type="binding site" evidence="1">
    <location>
        <position position="24"/>
    </location>
    <ligand>
        <name>substrate</name>
    </ligand>
</feature>
<feature type="binding site" evidence="1">
    <location>
        <position position="106"/>
    </location>
    <ligand>
        <name>FMN</name>
        <dbReference type="ChEBI" id="CHEBI:58210"/>
    </ligand>
</feature>
<feature type="binding site" evidence="1">
    <location>
        <position position="127"/>
    </location>
    <ligand>
        <name>FMN</name>
        <dbReference type="ChEBI" id="CHEBI:58210"/>
    </ligand>
</feature>
<feature type="binding site" evidence="1">
    <location>
        <position position="129"/>
    </location>
    <ligand>
        <name>substrate</name>
    </ligand>
</feature>
<feature type="binding site" evidence="1">
    <location>
        <position position="155"/>
    </location>
    <ligand>
        <name>FMN</name>
        <dbReference type="ChEBI" id="CHEBI:58210"/>
    </ligand>
</feature>
<feature type="binding site" evidence="1">
    <location>
        <position position="164"/>
    </location>
    <ligand>
        <name>substrate</name>
    </ligand>
</feature>
<feature type="binding site" evidence="1">
    <location>
        <position position="251"/>
    </location>
    <ligand>
        <name>FMN</name>
        <dbReference type="ChEBI" id="CHEBI:58210"/>
    </ligand>
</feature>
<feature type="binding site" evidence="1">
    <location>
        <position position="278"/>
    </location>
    <ligand>
        <name>substrate</name>
    </ligand>
</feature>
<feature type="binding site" evidence="1">
    <location>
        <begin position="306"/>
        <end position="330"/>
    </location>
    <ligand>
        <name>FMN</name>
        <dbReference type="ChEBI" id="CHEBI:58210"/>
    </ligand>
</feature>
<comment type="function">
    <text evidence="1">Catalyzes the conversion of L-lactate to pyruvate. Is coupled to the respiratory chain.</text>
</comment>
<comment type="catalytic activity">
    <reaction evidence="1">
        <text>(S)-lactate + A = pyruvate + AH2</text>
        <dbReference type="Rhea" id="RHEA:45816"/>
        <dbReference type="ChEBI" id="CHEBI:13193"/>
        <dbReference type="ChEBI" id="CHEBI:15361"/>
        <dbReference type="ChEBI" id="CHEBI:16651"/>
        <dbReference type="ChEBI" id="CHEBI:17499"/>
    </reaction>
</comment>
<comment type="cofactor">
    <cofactor evidence="1">
        <name>FMN</name>
        <dbReference type="ChEBI" id="CHEBI:58210"/>
    </cofactor>
</comment>
<comment type="subcellular location">
    <subcellularLocation>
        <location evidence="1">Cell inner membrane</location>
        <topology evidence="1">Peripheral membrane protein</topology>
    </subcellularLocation>
</comment>
<comment type="similarity">
    <text evidence="1">Belongs to the FMN-dependent alpha-hydroxy acid dehydrogenase family.</text>
</comment>
<sequence>MIISASTDYRAAAKAKLPPFLFHYIDGGSYGEHTLRRNTDDLADIALRQRVLSDMSELSLETELFGEKMALPIALSPVGLTGMYARRGEVQAAQAAEAKGIPFTLSTVSVCPIEEVAPSIHRPIWFQLYVLKDRGFMKNVLERAKAAGVKNLVFTVDMPVPGARYRDMHSGMSGPNAAMRRVLQAMAHPSWAWDVGLLGKPHDLGNISKYRGSPTKLEDYIGWLGANFDPSISWKDLEWIRDFWDGPMIIKGILDTEDAKDAVRFGADGIVVSNHGGRQLDGVLSTVQALPAIADAVKGDLKILVDSGIRTGLDVVRMLALGADCTMLGRSFIYALAAQGRAGVENLLDLYEKEMRVAMTLTGAKSIAELSRDSLVKR</sequence>
<accession>C3LWP7</accession>
<protein>
    <recommendedName>
        <fullName evidence="1">L-lactate dehydrogenase</fullName>
        <ecNumber evidence="1">1.1.-.-</ecNumber>
    </recommendedName>
</protein>
<proteinExistence type="inferred from homology"/>
<reference key="1">
    <citation type="journal article" date="2008" name="PLoS ONE">
        <title>A recalibrated molecular clock and independent origins for the cholera pandemic clones.</title>
        <authorList>
            <person name="Feng L."/>
            <person name="Reeves P.R."/>
            <person name="Lan R."/>
            <person name="Ren Y."/>
            <person name="Gao C."/>
            <person name="Zhou Z."/>
            <person name="Ren Y."/>
            <person name="Cheng J."/>
            <person name="Wang W."/>
            <person name="Wang J."/>
            <person name="Qian W."/>
            <person name="Li D."/>
            <person name="Wang L."/>
        </authorList>
    </citation>
    <scope>NUCLEOTIDE SEQUENCE [LARGE SCALE GENOMIC DNA]</scope>
    <source>
        <strain>M66-2</strain>
    </source>
</reference>